<sequence>MPPLIALSPETSQALADRQPLVALESTIITHGMPYPQNLEVAQQVEAAVREEGAVPATIAVMGGRIRVGLDAEALEALASTPAEQVMKLSRADLAACLALGRTGATTVAATMICAHLAGIEVFATGGIGGVHRGAETSFDISADLQELAQSPVTVVAAGAKAILDLPKTLEVLETLGVPVIAFGQDQLPAFWSRESGLAAPLRMDDPAQIAASARLRRELGLSGGQLVVNPIPPEAEIPRAEMIPVVEQALSEAEAQGIAAKAVTPFLLQRIFELTQGRSLDANIALVLNNARLAARIAAAMAT</sequence>
<comment type="function">
    <text evidence="1">Catalyzes the reversible cleavage of pseudouridine 5'-phosphate (PsiMP) to ribose 5-phosphate and uracil. Functions biologically in the cleavage direction, as part of a pseudouridine degradation pathway.</text>
</comment>
<comment type="catalytic activity">
    <reaction evidence="1">
        <text>D-ribose 5-phosphate + uracil = psi-UMP + H2O</text>
        <dbReference type="Rhea" id="RHEA:18337"/>
        <dbReference type="ChEBI" id="CHEBI:15377"/>
        <dbReference type="ChEBI" id="CHEBI:17568"/>
        <dbReference type="ChEBI" id="CHEBI:58380"/>
        <dbReference type="ChEBI" id="CHEBI:78346"/>
        <dbReference type="EC" id="4.2.1.70"/>
    </reaction>
</comment>
<comment type="cofactor">
    <cofactor evidence="1">
        <name>Mn(2+)</name>
        <dbReference type="ChEBI" id="CHEBI:29035"/>
    </cofactor>
    <text evidence="1">Binds 1 Mn(2+) ion per subunit.</text>
</comment>
<comment type="subunit">
    <text evidence="1">Homotrimer.</text>
</comment>
<comment type="similarity">
    <text evidence="1">Belongs to the pseudouridine-5'-phosphate glycosidase family.</text>
</comment>
<dbReference type="EC" id="4.2.1.70" evidence="1"/>
<dbReference type="EMBL" id="CP000489">
    <property type="protein sequence ID" value="ABL69910.1"/>
    <property type="molecule type" value="Genomic_DNA"/>
</dbReference>
<dbReference type="RefSeq" id="WP_011748107.1">
    <property type="nucleotide sequence ID" value="NC_008686.1"/>
</dbReference>
<dbReference type="SMR" id="A1B316"/>
<dbReference type="STRING" id="318586.Pden_1813"/>
<dbReference type="EnsemblBacteria" id="ABL69910">
    <property type="protein sequence ID" value="ABL69910"/>
    <property type="gene ID" value="Pden_1813"/>
</dbReference>
<dbReference type="GeneID" id="93450209"/>
<dbReference type="KEGG" id="pde:Pden_1813"/>
<dbReference type="eggNOG" id="COG2313">
    <property type="taxonomic scope" value="Bacteria"/>
</dbReference>
<dbReference type="HOGENOM" id="CLU_012201_0_1_5"/>
<dbReference type="OrthoDB" id="9805870at2"/>
<dbReference type="Proteomes" id="UP000000361">
    <property type="component" value="Chromosome 1"/>
</dbReference>
<dbReference type="GO" id="GO:0005737">
    <property type="term" value="C:cytoplasm"/>
    <property type="evidence" value="ECO:0007669"/>
    <property type="project" value="TreeGrafter"/>
</dbReference>
<dbReference type="GO" id="GO:0016798">
    <property type="term" value="F:hydrolase activity, acting on glycosyl bonds"/>
    <property type="evidence" value="ECO:0007669"/>
    <property type="project" value="UniProtKB-KW"/>
</dbReference>
<dbReference type="GO" id="GO:0046872">
    <property type="term" value="F:metal ion binding"/>
    <property type="evidence" value="ECO:0007669"/>
    <property type="project" value="UniProtKB-KW"/>
</dbReference>
<dbReference type="GO" id="GO:0004730">
    <property type="term" value="F:pseudouridylate synthase activity"/>
    <property type="evidence" value="ECO:0007669"/>
    <property type="project" value="UniProtKB-UniRule"/>
</dbReference>
<dbReference type="GO" id="GO:0046113">
    <property type="term" value="P:nucleobase catabolic process"/>
    <property type="evidence" value="ECO:0007669"/>
    <property type="project" value="UniProtKB-UniRule"/>
</dbReference>
<dbReference type="Gene3D" id="3.40.1790.10">
    <property type="entry name" value="Indigoidine synthase domain"/>
    <property type="match status" value="1"/>
</dbReference>
<dbReference type="HAMAP" id="MF_01876">
    <property type="entry name" value="PsiMP_glycosidase"/>
    <property type="match status" value="1"/>
</dbReference>
<dbReference type="InterPro" id="IPR022830">
    <property type="entry name" value="Indigdn_synthA-like"/>
</dbReference>
<dbReference type="InterPro" id="IPR007342">
    <property type="entry name" value="PsuG"/>
</dbReference>
<dbReference type="PANTHER" id="PTHR42909:SF1">
    <property type="entry name" value="CARBOHYDRATE KINASE PFKB DOMAIN-CONTAINING PROTEIN"/>
    <property type="match status" value="1"/>
</dbReference>
<dbReference type="PANTHER" id="PTHR42909">
    <property type="entry name" value="ZGC:136858"/>
    <property type="match status" value="1"/>
</dbReference>
<dbReference type="Pfam" id="PF04227">
    <property type="entry name" value="Indigoidine_A"/>
    <property type="match status" value="1"/>
</dbReference>
<dbReference type="SUPFAM" id="SSF110581">
    <property type="entry name" value="Indigoidine synthase A-like"/>
    <property type="match status" value="1"/>
</dbReference>
<protein>
    <recommendedName>
        <fullName evidence="1">Pseudouridine-5'-phosphate glycosidase</fullName>
        <shortName evidence="1">PsiMP glycosidase</shortName>
        <ecNumber evidence="1">4.2.1.70</ecNumber>
    </recommendedName>
</protein>
<keyword id="KW-0326">Glycosidase</keyword>
<keyword id="KW-0378">Hydrolase</keyword>
<keyword id="KW-0456">Lyase</keyword>
<keyword id="KW-0464">Manganese</keyword>
<keyword id="KW-0479">Metal-binding</keyword>
<keyword id="KW-1185">Reference proteome</keyword>
<gene>
    <name evidence="1" type="primary">psuG</name>
    <name type="ordered locus">Pden_1813</name>
</gene>
<reference key="1">
    <citation type="submission" date="2006-12" db="EMBL/GenBank/DDBJ databases">
        <title>Complete sequence of chromosome 1 of Paracoccus denitrificans PD1222.</title>
        <authorList>
            <person name="Copeland A."/>
            <person name="Lucas S."/>
            <person name="Lapidus A."/>
            <person name="Barry K."/>
            <person name="Detter J.C."/>
            <person name="Glavina del Rio T."/>
            <person name="Hammon N."/>
            <person name="Israni S."/>
            <person name="Dalin E."/>
            <person name="Tice H."/>
            <person name="Pitluck S."/>
            <person name="Munk A.C."/>
            <person name="Brettin T."/>
            <person name="Bruce D."/>
            <person name="Han C."/>
            <person name="Tapia R."/>
            <person name="Gilna P."/>
            <person name="Schmutz J."/>
            <person name="Larimer F."/>
            <person name="Land M."/>
            <person name="Hauser L."/>
            <person name="Kyrpides N."/>
            <person name="Lykidis A."/>
            <person name="Spiro S."/>
            <person name="Richardson D.J."/>
            <person name="Moir J.W.B."/>
            <person name="Ferguson S.J."/>
            <person name="van Spanning R.J.M."/>
            <person name="Richardson P."/>
        </authorList>
    </citation>
    <scope>NUCLEOTIDE SEQUENCE [LARGE SCALE GENOMIC DNA]</scope>
    <source>
        <strain>Pd 1222</strain>
    </source>
</reference>
<accession>A1B316</accession>
<name>PSUG_PARDP</name>
<feature type="chain" id="PRO_0000390533" description="Pseudouridine-5'-phosphate glycosidase">
    <location>
        <begin position="1"/>
        <end position="304"/>
    </location>
</feature>
<feature type="active site" description="Proton donor" evidence="1">
    <location>
        <position position="25"/>
    </location>
</feature>
<feature type="active site" description="Nucleophile" evidence="1">
    <location>
        <position position="161"/>
    </location>
</feature>
<feature type="binding site" evidence="1">
    <location>
        <position position="88"/>
    </location>
    <ligand>
        <name>substrate</name>
    </ligand>
</feature>
<feature type="binding site" evidence="1">
    <location>
        <position position="108"/>
    </location>
    <ligand>
        <name>substrate</name>
    </ligand>
</feature>
<feature type="binding site" evidence="1">
    <location>
        <position position="140"/>
    </location>
    <ligand>
        <name>Mn(2+)</name>
        <dbReference type="ChEBI" id="CHEBI:29035"/>
    </ligand>
</feature>
<feature type="binding site" evidence="1">
    <location>
        <begin position="142"/>
        <end position="144"/>
    </location>
    <ligand>
        <name>substrate</name>
    </ligand>
</feature>
<proteinExistence type="inferred from homology"/>
<organism>
    <name type="scientific">Paracoccus denitrificans (strain Pd 1222)</name>
    <dbReference type="NCBI Taxonomy" id="318586"/>
    <lineage>
        <taxon>Bacteria</taxon>
        <taxon>Pseudomonadati</taxon>
        <taxon>Pseudomonadota</taxon>
        <taxon>Alphaproteobacteria</taxon>
        <taxon>Rhodobacterales</taxon>
        <taxon>Paracoccaceae</taxon>
        <taxon>Paracoccus</taxon>
    </lineage>
</organism>
<evidence type="ECO:0000255" key="1">
    <source>
        <dbReference type="HAMAP-Rule" id="MF_01876"/>
    </source>
</evidence>